<accession>A1K9C3</accession>
<comment type="function">
    <text evidence="1">One of the proteins required for the normal export of preproteins out of the cell cytoplasm. It is a molecular chaperone that binds to a subset of precursor proteins, maintaining them in a translocation-competent state. It also specifically binds to its receptor SecA.</text>
</comment>
<comment type="subunit">
    <text evidence="1">Homotetramer, a dimer of dimers. One homotetramer interacts with 1 SecA dimer.</text>
</comment>
<comment type="subcellular location">
    <subcellularLocation>
        <location evidence="1">Cytoplasm</location>
    </subcellularLocation>
</comment>
<comment type="similarity">
    <text evidence="1">Belongs to the SecB family.</text>
</comment>
<organism>
    <name type="scientific">Azoarcus sp. (strain BH72)</name>
    <dbReference type="NCBI Taxonomy" id="418699"/>
    <lineage>
        <taxon>Bacteria</taxon>
        <taxon>Pseudomonadati</taxon>
        <taxon>Pseudomonadota</taxon>
        <taxon>Betaproteobacteria</taxon>
        <taxon>Rhodocyclales</taxon>
        <taxon>Zoogloeaceae</taxon>
        <taxon>Azoarcus</taxon>
    </lineage>
</organism>
<evidence type="ECO:0000255" key="1">
    <source>
        <dbReference type="HAMAP-Rule" id="MF_00821"/>
    </source>
</evidence>
<feature type="chain" id="PRO_0000318218" description="Protein-export protein SecB">
    <location>
        <begin position="1"/>
        <end position="151"/>
    </location>
</feature>
<keyword id="KW-0143">Chaperone</keyword>
<keyword id="KW-0963">Cytoplasm</keyword>
<keyword id="KW-0653">Protein transport</keyword>
<keyword id="KW-1185">Reference proteome</keyword>
<keyword id="KW-0811">Translocation</keyword>
<keyword id="KW-0813">Transport</keyword>
<name>SECB_AZOSB</name>
<proteinExistence type="inferred from homology"/>
<protein>
    <recommendedName>
        <fullName evidence="1">Protein-export protein SecB</fullName>
    </recommendedName>
</protein>
<sequence length="151" mass="16511">MTENAQPMFSIEKIYIKDLSLEVPNAPKIFLERDTPQISVQLRTEGNTVDEGLYEVTLTVTVSATLGEDRSVFLVEVAQAGVFQIRNVPPAELEPVMMIGCPNILFPYAREAVSAAVSRAGFQPIVLAPVNFEALYQQQQAAKEGGDVAIQ</sequence>
<gene>
    <name evidence="1" type="primary">secB</name>
    <name type="ordered locus">azo2812</name>
</gene>
<dbReference type="EMBL" id="AM406670">
    <property type="protein sequence ID" value="CAL95428.1"/>
    <property type="molecule type" value="Genomic_DNA"/>
</dbReference>
<dbReference type="RefSeq" id="WP_011766538.1">
    <property type="nucleotide sequence ID" value="NC_008702.1"/>
</dbReference>
<dbReference type="SMR" id="A1K9C3"/>
<dbReference type="STRING" id="62928.azo2812"/>
<dbReference type="KEGG" id="aoa:dqs_2951"/>
<dbReference type="KEGG" id="azo:azo2812"/>
<dbReference type="eggNOG" id="COG1952">
    <property type="taxonomic scope" value="Bacteria"/>
</dbReference>
<dbReference type="HOGENOM" id="CLU_111574_1_0_4"/>
<dbReference type="OrthoDB" id="9795145at2"/>
<dbReference type="Proteomes" id="UP000002588">
    <property type="component" value="Chromosome"/>
</dbReference>
<dbReference type="GO" id="GO:0005737">
    <property type="term" value="C:cytoplasm"/>
    <property type="evidence" value="ECO:0007669"/>
    <property type="project" value="UniProtKB-SubCell"/>
</dbReference>
<dbReference type="GO" id="GO:0051082">
    <property type="term" value="F:unfolded protein binding"/>
    <property type="evidence" value="ECO:0007669"/>
    <property type="project" value="InterPro"/>
</dbReference>
<dbReference type="GO" id="GO:0006457">
    <property type="term" value="P:protein folding"/>
    <property type="evidence" value="ECO:0007669"/>
    <property type="project" value="UniProtKB-UniRule"/>
</dbReference>
<dbReference type="GO" id="GO:0051262">
    <property type="term" value="P:protein tetramerization"/>
    <property type="evidence" value="ECO:0007669"/>
    <property type="project" value="InterPro"/>
</dbReference>
<dbReference type="GO" id="GO:0015031">
    <property type="term" value="P:protein transport"/>
    <property type="evidence" value="ECO:0007669"/>
    <property type="project" value="UniProtKB-UniRule"/>
</dbReference>
<dbReference type="Gene3D" id="3.10.420.10">
    <property type="entry name" value="SecB-like"/>
    <property type="match status" value="1"/>
</dbReference>
<dbReference type="HAMAP" id="MF_00821">
    <property type="entry name" value="SecB"/>
    <property type="match status" value="1"/>
</dbReference>
<dbReference type="InterPro" id="IPR003708">
    <property type="entry name" value="SecB"/>
</dbReference>
<dbReference type="InterPro" id="IPR035958">
    <property type="entry name" value="SecB-like_sf"/>
</dbReference>
<dbReference type="NCBIfam" id="NF004392">
    <property type="entry name" value="PRK05751.1-3"/>
    <property type="match status" value="1"/>
</dbReference>
<dbReference type="NCBIfam" id="NF004394">
    <property type="entry name" value="PRK05751.1-5"/>
    <property type="match status" value="1"/>
</dbReference>
<dbReference type="NCBIfam" id="TIGR00809">
    <property type="entry name" value="secB"/>
    <property type="match status" value="1"/>
</dbReference>
<dbReference type="PANTHER" id="PTHR36918">
    <property type="match status" value="1"/>
</dbReference>
<dbReference type="PANTHER" id="PTHR36918:SF1">
    <property type="entry name" value="PROTEIN-EXPORT PROTEIN SECB"/>
    <property type="match status" value="1"/>
</dbReference>
<dbReference type="Pfam" id="PF02556">
    <property type="entry name" value="SecB"/>
    <property type="match status" value="1"/>
</dbReference>
<dbReference type="PRINTS" id="PR01594">
    <property type="entry name" value="SECBCHAPRONE"/>
</dbReference>
<dbReference type="SUPFAM" id="SSF54611">
    <property type="entry name" value="SecB-like"/>
    <property type="match status" value="1"/>
</dbReference>
<reference key="1">
    <citation type="journal article" date="2006" name="Nat. Biotechnol.">
        <title>Complete genome of the mutualistic, N2-fixing grass endophyte Azoarcus sp. strain BH72.</title>
        <authorList>
            <person name="Krause A."/>
            <person name="Ramakumar A."/>
            <person name="Bartels D."/>
            <person name="Battistoni F."/>
            <person name="Bekel T."/>
            <person name="Boch J."/>
            <person name="Boehm M."/>
            <person name="Friedrich F."/>
            <person name="Hurek T."/>
            <person name="Krause L."/>
            <person name="Linke B."/>
            <person name="McHardy A.C."/>
            <person name="Sarkar A."/>
            <person name="Schneiker S."/>
            <person name="Syed A.A."/>
            <person name="Thauer R."/>
            <person name="Vorhoelter F.-J."/>
            <person name="Weidner S."/>
            <person name="Puehler A."/>
            <person name="Reinhold-Hurek B."/>
            <person name="Kaiser O."/>
            <person name="Goesmann A."/>
        </authorList>
    </citation>
    <scope>NUCLEOTIDE SEQUENCE [LARGE SCALE GENOMIC DNA]</scope>
    <source>
        <strain>BH72</strain>
    </source>
</reference>